<protein>
    <recommendedName>
        <fullName evidence="1">ATP synthase subunit alpha 1</fullName>
        <ecNumber evidence="1">7.1.2.2</ecNumber>
    </recommendedName>
    <alternativeName>
        <fullName evidence="1">ATP synthase F1 sector subunit alpha 1</fullName>
    </alternativeName>
    <alternativeName>
        <fullName evidence="1">F-ATPase subunit alpha 1</fullName>
    </alternativeName>
</protein>
<name>ATPA1_BURMS</name>
<gene>
    <name evidence="1" type="primary">atpA1</name>
    <name type="ordered locus">BMASAVP1_A3357</name>
</gene>
<reference key="1">
    <citation type="journal article" date="2010" name="Genome Biol. Evol.">
        <title>Continuing evolution of Burkholderia mallei through genome reduction and large-scale rearrangements.</title>
        <authorList>
            <person name="Losada L."/>
            <person name="Ronning C.M."/>
            <person name="DeShazer D."/>
            <person name="Woods D."/>
            <person name="Fedorova N."/>
            <person name="Kim H.S."/>
            <person name="Shabalina S.A."/>
            <person name="Pearson T.R."/>
            <person name="Brinkac L."/>
            <person name="Tan P."/>
            <person name="Nandi T."/>
            <person name="Crabtree J."/>
            <person name="Badger J."/>
            <person name="Beckstrom-Sternberg S."/>
            <person name="Saqib M."/>
            <person name="Schutzer S.E."/>
            <person name="Keim P."/>
            <person name="Nierman W.C."/>
        </authorList>
    </citation>
    <scope>NUCLEOTIDE SEQUENCE [LARGE SCALE GENOMIC DNA]</scope>
    <source>
        <strain>SAVP1</strain>
    </source>
</reference>
<comment type="function">
    <text evidence="1">Produces ATP from ADP in the presence of a proton gradient across the membrane. The alpha chain is a regulatory subunit.</text>
</comment>
<comment type="catalytic activity">
    <reaction evidence="1">
        <text>ATP + H2O + 4 H(+)(in) = ADP + phosphate + 5 H(+)(out)</text>
        <dbReference type="Rhea" id="RHEA:57720"/>
        <dbReference type="ChEBI" id="CHEBI:15377"/>
        <dbReference type="ChEBI" id="CHEBI:15378"/>
        <dbReference type="ChEBI" id="CHEBI:30616"/>
        <dbReference type="ChEBI" id="CHEBI:43474"/>
        <dbReference type="ChEBI" id="CHEBI:456216"/>
        <dbReference type="EC" id="7.1.2.2"/>
    </reaction>
</comment>
<comment type="subunit">
    <text evidence="1">F-type ATPases have 2 components, CF(1) - the catalytic core - and CF(0) - the membrane proton channel. CF(1) has five subunits: alpha(3), beta(3), gamma(1), delta(1), epsilon(1). CF(0) has three main subunits: a(1), b(2) and c(9-12). The alpha and beta chains form an alternating ring which encloses part of the gamma chain. CF(1) is attached to CF(0) by a central stalk formed by the gamma and epsilon chains, while a peripheral stalk is formed by the delta and b chains.</text>
</comment>
<comment type="subcellular location">
    <subcellularLocation>
        <location evidence="1">Cell inner membrane</location>
        <topology evidence="1">Peripheral membrane protein</topology>
    </subcellularLocation>
</comment>
<comment type="similarity">
    <text evidence="1">Belongs to the ATPase alpha/beta chains family.</text>
</comment>
<feature type="chain" id="PRO_0000339021" description="ATP synthase subunit alpha 1">
    <location>
        <begin position="1"/>
        <end position="513"/>
    </location>
</feature>
<feature type="binding site" evidence="1">
    <location>
        <begin position="169"/>
        <end position="176"/>
    </location>
    <ligand>
        <name>ATP</name>
        <dbReference type="ChEBI" id="CHEBI:30616"/>
    </ligand>
</feature>
<feature type="site" description="Required for activity" evidence="1">
    <location>
        <position position="373"/>
    </location>
</feature>
<proteinExistence type="inferred from homology"/>
<evidence type="ECO:0000255" key="1">
    <source>
        <dbReference type="HAMAP-Rule" id="MF_01346"/>
    </source>
</evidence>
<accession>A1V8T3</accession>
<sequence>MQLNPSEISELIKSRIQGLEASADVRNQGTVISVTDGIVRIHGLSDVMQGEMLEFPGNTFGLALNLERDSVGAVILGEYEHISEGDIVKTTGRILEVPVGPELVGRVLDALGNPIDGKGPVNAKLTDAIEKIAPGVIWRKSVSQPVQTGLKSIDSMVPIGRGQRELIIGDRQCGKTAVAIDTIINQKGKDLICIYVAIGQKASSIMNVVRKLEETGALEYTIVVAASASESAAMQYLAPYAGCTMGEYFRDRGQDALIIYDDLTKQAWAYRQISLLLRRPPGREAYPGDVFYLHSRLLERAARVSEEYVEKFTNGEVKGKSGSLTALPVIETQAGDVTAFVPTNVISITDGQIFLETDLFNAGIRPAINAGVSVSRVGGAAQTKVVKKLSGGIRTDLAQYRELAAFAQFASDLDEATRKQLERGRRVTELLKQPQYQPLQVWELAVSLFSANNGYLDDLDVKDVLPFEKGLREYLKTSHADLIKRIEDTKDLSKDDESALHAALKDFKKSGAY</sequence>
<keyword id="KW-0066">ATP synthesis</keyword>
<keyword id="KW-0067">ATP-binding</keyword>
<keyword id="KW-0997">Cell inner membrane</keyword>
<keyword id="KW-1003">Cell membrane</keyword>
<keyword id="KW-0139">CF(1)</keyword>
<keyword id="KW-0375">Hydrogen ion transport</keyword>
<keyword id="KW-0406">Ion transport</keyword>
<keyword id="KW-0472">Membrane</keyword>
<keyword id="KW-0547">Nucleotide-binding</keyword>
<keyword id="KW-1278">Translocase</keyword>
<keyword id="KW-0813">Transport</keyword>
<dbReference type="EC" id="7.1.2.2" evidence="1"/>
<dbReference type="EMBL" id="CP000526">
    <property type="protein sequence ID" value="ABM51897.1"/>
    <property type="molecule type" value="Genomic_DNA"/>
</dbReference>
<dbReference type="SMR" id="A1V8T3"/>
<dbReference type="KEGG" id="bmv:BMASAVP1_A3357"/>
<dbReference type="HOGENOM" id="CLU_010091_2_1_4"/>
<dbReference type="GO" id="GO:0005886">
    <property type="term" value="C:plasma membrane"/>
    <property type="evidence" value="ECO:0007669"/>
    <property type="project" value="UniProtKB-SubCell"/>
</dbReference>
<dbReference type="GO" id="GO:0045259">
    <property type="term" value="C:proton-transporting ATP synthase complex"/>
    <property type="evidence" value="ECO:0007669"/>
    <property type="project" value="UniProtKB-KW"/>
</dbReference>
<dbReference type="GO" id="GO:0043531">
    <property type="term" value="F:ADP binding"/>
    <property type="evidence" value="ECO:0007669"/>
    <property type="project" value="TreeGrafter"/>
</dbReference>
<dbReference type="GO" id="GO:0005524">
    <property type="term" value="F:ATP binding"/>
    <property type="evidence" value="ECO:0007669"/>
    <property type="project" value="UniProtKB-UniRule"/>
</dbReference>
<dbReference type="GO" id="GO:0046933">
    <property type="term" value="F:proton-transporting ATP synthase activity, rotational mechanism"/>
    <property type="evidence" value="ECO:0007669"/>
    <property type="project" value="UniProtKB-UniRule"/>
</dbReference>
<dbReference type="CDD" id="cd18113">
    <property type="entry name" value="ATP-synt_F1_alpha_C"/>
    <property type="match status" value="1"/>
</dbReference>
<dbReference type="CDD" id="cd18116">
    <property type="entry name" value="ATP-synt_F1_alpha_N"/>
    <property type="match status" value="1"/>
</dbReference>
<dbReference type="CDD" id="cd01132">
    <property type="entry name" value="F1-ATPase_alpha_CD"/>
    <property type="match status" value="1"/>
</dbReference>
<dbReference type="FunFam" id="1.20.150.20:FF:000001">
    <property type="entry name" value="ATP synthase subunit alpha"/>
    <property type="match status" value="1"/>
</dbReference>
<dbReference type="FunFam" id="2.40.30.20:FF:000001">
    <property type="entry name" value="ATP synthase subunit alpha"/>
    <property type="match status" value="1"/>
</dbReference>
<dbReference type="FunFam" id="3.40.50.300:FF:000002">
    <property type="entry name" value="ATP synthase subunit alpha"/>
    <property type="match status" value="1"/>
</dbReference>
<dbReference type="Gene3D" id="2.40.30.20">
    <property type="match status" value="1"/>
</dbReference>
<dbReference type="Gene3D" id="1.20.150.20">
    <property type="entry name" value="ATP synthase alpha/beta chain, C-terminal domain"/>
    <property type="match status" value="1"/>
</dbReference>
<dbReference type="Gene3D" id="3.40.50.300">
    <property type="entry name" value="P-loop containing nucleotide triphosphate hydrolases"/>
    <property type="match status" value="1"/>
</dbReference>
<dbReference type="HAMAP" id="MF_01346">
    <property type="entry name" value="ATP_synth_alpha_bact"/>
    <property type="match status" value="1"/>
</dbReference>
<dbReference type="InterPro" id="IPR023366">
    <property type="entry name" value="ATP_synth_asu-like_sf"/>
</dbReference>
<dbReference type="InterPro" id="IPR000793">
    <property type="entry name" value="ATP_synth_asu_C"/>
</dbReference>
<dbReference type="InterPro" id="IPR038376">
    <property type="entry name" value="ATP_synth_asu_C_sf"/>
</dbReference>
<dbReference type="InterPro" id="IPR033732">
    <property type="entry name" value="ATP_synth_F1_a_nt-bd_dom"/>
</dbReference>
<dbReference type="InterPro" id="IPR005294">
    <property type="entry name" value="ATP_synth_F1_asu"/>
</dbReference>
<dbReference type="InterPro" id="IPR020003">
    <property type="entry name" value="ATPase_a/bsu_AS"/>
</dbReference>
<dbReference type="InterPro" id="IPR004100">
    <property type="entry name" value="ATPase_F1/V1/A1_a/bsu_N"/>
</dbReference>
<dbReference type="InterPro" id="IPR036121">
    <property type="entry name" value="ATPase_F1/V1/A1_a/bsu_N_sf"/>
</dbReference>
<dbReference type="InterPro" id="IPR000194">
    <property type="entry name" value="ATPase_F1/V1/A1_a/bsu_nucl-bd"/>
</dbReference>
<dbReference type="InterPro" id="IPR027417">
    <property type="entry name" value="P-loop_NTPase"/>
</dbReference>
<dbReference type="NCBIfam" id="TIGR00962">
    <property type="entry name" value="atpA"/>
    <property type="match status" value="1"/>
</dbReference>
<dbReference type="NCBIfam" id="NF009884">
    <property type="entry name" value="PRK13343.1"/>
    <property type="match status" value="1"/>
</dbReference>
<dbReference type="PANTHER" id="PTHR48082">
    <property type="entry name" value="ATP SYNTHASE SUBUNIT ALPHA, MITOCHONDRIAL"/>
    <property type="match status" value="1"/>
</dbReference>
<dbReference type="PANTHER" id="PTHR48082:SF2">
    <property type="entry name" value="ATP SYNTHASE SUBUNIT ALPHA, MITOCHONDRIAL"/>
    <property type="match status" value="1"/>
</dbReference>
<dbReference type="Pfam" id="PF00006">
    <property type="entry name" value="ATP-synt_ab"/>
    <property type="match status" value="1"/>
</dbReference>
<dbReference type="Pfam" id="PF00306">
    <property type="entry name" value="ATP-synt_ab_C"/>
    <property type="match status" value="1"/>
</dbReference>
<dbReference type="Pfam" id="PF02874">
    <property type="entry name" value="ATP-synt_ab_N"/>
    <property type="match status" value="1"/>
</dbReference>
<dbReference type="PIRSF" id="PIRSF039088">
    <property type="entry name" value="F_ATPase_subunit_alpha"/>
    <property type="match status" value="1"/>
</dbReference>
<dbReference type="SUPFAM" id="SSF47917">
    <property type="entry name" value="C-terminal domain of alpha and beta subunits of F1 ATP synthase"/>
    <property type="match status" value="1"/>
</dbReference>
<dbReference type="SUPFAM" id="SSF50615">
    <property type="entry name" value="N-terminal domain of alpha and beta subunits of F1 ATP synthase"/>
    <property type="match status" value="1"/>
</dbReference>
<dbReference type="SUPFAM" id="SSF52540">
    <property type="entry name" value="P-loop containing nucleoside triphosphate hydrolases"/>
    <property type="match status" value="1"/>
</dbReference>
<dbReference type="PROSITE" id="PS00152">
    <property type="entry name" value="ATPASE_ALPHA_BETA"/>
    <property type="match status" value="1"/>
</dbReference>
<organism>
    <name type="scientific">Burkholderia mallei (strain SAVP1)</name>
    <dbReference type="NCBI Taxonomy" id="320388"/>
    <lineage>
        <taxon>Bacteria</taxon>
        <taxon>Pseudomonadati</taxon>
        <taxon>Pseudomonadota</taxon>
        <taxon>Betaproteobacteria</taxon>
        <taxon>Burkholderiales</taxon>
        <taxon>Burkholderiaceae</taxon>
        <taxon>Burkholderia</taxon>
        <taxon>pseudomallei group</taxon>
    </lineage>
</organism>